<protein>
    <recommendedName>
        <fullName>ATP-dependent DNA helicase II subunit 1</fullName>
        <ecNumber>3.6.4.12</ecNumber>
    </recommendedName>
    <alternativeName>
        <fullName>ATP-dependent DNA helicase II subunit Ku70</fullName>
    </alternativeName>
</protein>
<name>KU70_EMENI</name>
<gene>
    <name type="primary">ku70</name>
    <name type="ORF">AN7753</name>
</gene>
<organism>
    <name type="scientific">Emericella nidulans (strain FGSC A4 / ATCC 38163 / CBS 112.46 / NRRL 194 / M139)</name>
    <name type="common">Aspergillus nidulans</name>
    <dbReference type="NCBI Taxonomy" id="227321"/>
    <lineage>
        <taxon>Eukaryota</taxon>
        <taxon>Fungi</taxon>
        <taxon>Dikarya</taxon>
        <taxon>Ascomycota</taxon>
        <taxon>Pezizomycotina</taxon>
        <taxon>Eurotiomycetes</taxon>
        <taxon>Eurotiomycetidae</taxon>
        <taxon>Eurotiales</taxon>
        <taxon>Aspergillaceae</taxon>
        <taxon>Aspergillus</taxon>
        <taxon>Aspergillus subgen. Nidulantes</taxon>
    </lineage>
</organism>
<sequence>MADDYREDDVVEEEEELDEAPRPSADPKRQSYESPATAALKCAYHLMQQRIISNPRDMIGVLLYGTKQSKFYDEDENSRGDLTYPNCYLFTDLNIPSAHEVLELRSLVQDEENAKKILEPSNEPVSMANLLFCVNQIFTLKAPNFLSRRLFIVTDNDNPHGDNKSFRSAATVRAKDLYDLGVTIELFPISQIEHEFDTSKFYDDIIYKASPNDPDAPAYLKPDAKMNDAQDGISLLNGLLSSINSRSVPRRAQFSNMSLELGPNFKISVSGYILFKRQESARSCYVWLGGEKPQIAKGVTTQIADDSARTIEKWEIKKAYKFGGDQVCFTPEEQKSLKDFGEPVIRIIGFKPLSTLPFWANIKHPLFIYPTEEDYVGSTRVFSALYQKLLRDQKVALVWYIARKAASPVLGAMMAGEEKVDENGIQKIPPGMWIIPLPFADDVRQNPETALQVAPEPLIDQMRTVIQQLQLPKGVYDPQKYPNPSLQWHYRILQALALDEDVPEKPDDKTIPKYRQIDKRAGGYVLDWADELEKQYAKITADQPKSTTLAKRPAKADNPDKAAPPAKKVKAEAGSGNIQDEVQKHFEQHTLSKLTVATLRDFLASQGRATAGKKAELLERVEELLETKF</sequence>
<comment type="function">
    <text evidence="1">Single-stranded DNA-dependent ATP-dependent helicase. Involved in non-homologous end joining (NHEJ) DNA double strand break repair. DNA-binding is sequence-independent but has a high affinity to nicks in double-stranded DNA and to the ends of duplex DNA. Binds to naturally occurring chromosomal ends, and therefore provides chromosomal end protection. Required also for telomere recombination to repair telomeric ends in the absence of telomerase. ku70, of the ku70/ku80 heterodimer, binds to the stem loop of tlc1, the RNA component of telomerase. Involved in telomere maintenance. Interacts with telomeric repeats and subtelomeric sequences thereby controlling telomere length and protecting against subtelomeric rearrangement. Maintains telomeric chromatin, which is involved in silencing the expression of genes located at the telomere. Required for mating-type switching (By similarity).</text>
</comment>
<comment type="catalytic activity">
    <reaction>
        <text>ATP + H2O = ADP + phosphate + H(+)</text>
        <dbReference type="Rhea" id="RHEA:13065"/>
        <dbReference type="ChEBI" id="CHEBI:15377"/>
        <dbReference type="ChEBI" id="CHEBI:15378"/>
        <dbReference type="ChEBI" id="CHEBI:30616"/>
        <dbReference type="ChEBI" id="CHEBI:43474"/>
        <dbReference type="ChEBI" id="CHEBI:456216"/>
        <dbReference type="EC" id="3.6.4.12"/>
    </reaction>
</comment>
<comment type="subunit">
    <text evidence="1">Heterodimer of Ku70 and Ku80.</text>
</comment>
<comment type="subcellular location">
    <subcellularLocation>
        <location evidence="1">Nucleus</location>
    </subcellularLocation>
    <subcellularLocation>
        <location evidence="1">Chromosome</location>
        <location evidence="1">Telomere</location>
    </subcellularLocation>
</comment>
<comment type="similarity">
    <text evidence="4">Belongs to the ku70 family.</text>
</comment>
<comment type="sequence caution" evidence="4">
    <conflict type="erroneous gene model prediction">
        <sequence resource="EMBL-CDS" id="CBF80039"/>
    </conflict>
</comment>
<reference key="1">
    <citation type="journal article" date="2005" name="Nature">
        <title>Sequencing of Aspergillus nidulans and comparative analysis with A. fumigatus and A. oryzae.</title>
        <authorList>
            <person name="Galagan J.E."/>
            <person name="Calvo S.E."/>
            <person name="Cuomo C."/>
            <person name="Ma L.-J."/>
            <person name="Wortman J.R."/>
            <person name="Batzoglou S."/>
            <person name="Lee S.-I."/>
            <person name="Bastuerkmen M."/>
            <person name="Spevak C.C."/>
            <person name="Clutterbuck J."/>
            <person name="Kapitonov V."/>
            <person name="Jurka J."/>
            <person name="Scazzocchio C."/>
            <person name="Farman M.L."/>
            <person name="Butler J."/>
            <person name="Purcell S."/>
            <person name="Harris S."/>
            <person name="Braus G.H."/>
            <person name="Draht O."/>
            <person name="Busch S."/>
            <person name="D'Enfert C."/>
            <person name="Bouchier C."/>
            <person name="Goldman G.H."/>
            <person name="Bell-Pedersen D."/>
            <person name="Griffiths-Jones S."/>
            <person name="Doonan J.H."/>
            <person name="Yu J."/>
            <person name="Vienken K."/>
            <person name="Pain A."/>
            <person name="Freitag M."/>
            <person name="Selker E.U."/>
            <person name="Archer D.B."/>
            <person name="Penalva M.A."/>
            <person name="Oakley B.R."/>
            <person name="Momany M."/>
            <person name="Tanaka T."/>
            <person name="Kumagai T."/>
            <person name="Asai K."/>
            <person name="Machida M."/>
            <person name="Nierman W.C."/>
            <person name="Denning D.W."/>
            <person name="Caddick M.X."/>
            <person name="Hynes M."/>
            <person name="Paoletti M."/>
            <person name="Fischer R."/>
            <person name="Miller B.L."/>
            <person name="Dyer P.S."/>
            <person name="Sachs M.S."/>
            <person name="Osmani S.A."/>
            <person name="Birren B.W."/>
        </authorList>
    </citation>
    <scope>NUCLEOTIDE SEQUENCE [LARGE SCALE GENOMIC DNA]</scope>
    <source>
        <strain>FGSC A4 / ATCC 38163 / CBS 112.46 / NRRL 194 / M139</strain>
    </source>
</reference>
<reference key="2">
    <citation type="journal article" date="2009" name="Fungal Genet. Biol.">
        <title>The 2008 update of the Aspergillus nidulans genome annotation: a community effort.</title>
        <authorList>
            <person name="Wortman J.R."/>
            <person name="Gilsenan J.M."/>
            <person name="Joardar V."/>
            <person name="Deegan J."/>
            <person name="Clutterbuck J."/>
            <person name="Andersen M.R."/>
            <person name="Archer D."/>
            <person name="Bencina M."/>
            <person name="Braus G."/>
            <person name="Coutinho P."/>
            <person name="von Dohren H."/>
            <person name="Doonan J."/>
            <person name="Driessen A.J."/>
            <person name="Durek P."/>
            <person name="Espeso E."/>
            <person name="Fekete E."/>
            <person name="Flipphi M."/>
            <person name="Estrada C.G."/>
            <person name="Geysens S."/>
            <person name="Goldman G."/>
            <person name="de Groot P.W."/>
            <person name="Hansen K."/>
            <person name="Harris S.D."/>
            <person name="Heinekamp T."/>
            <person name="Helmstaedt K."/>
            <person name="Henrissat B."/>
            <person name="Hofmann G."/>
            <person name="Homan T."/>
            <person name="Horio T."/>
            <person name="Horiuchi H."/>
            <person name="James S."/>
            <person name="Jones M."/>
            <person name="Karaffa L."/>
            <person name="Karanyi Z."/>
            <person name="Kato M."/>
            <person name="Keller N."/>
            <person name="Kelly D.E."/>
            <person name="Kiel J.A."/>
            <person name="Kim J.M."/>
            <person name="van der Klei I.J."/>
            <person name="Klis F.M."/>
            <person name="Kovalchuk A."/>
            <person name="Krasevec N."/>
            <person name="Kubicek C.P."/>
            <person name="Liu B."/>
            <person name="Maccabe A."/>
            <person name="Meyer V."/>
            <person name="Mirabito P."/>
            <person name="Miskei M."/>
            <person name="Mos M."/>
            <person name="Mullins J."/>
            <person name="Nelson D.R."/>
            <person name="Nielsen J."/>
            <person name="Oakley B.R."/>
            <person name="Osmani S.A."/>
            <person name="Pakula T."/>
            <person name="Paszewski A."/>
            <person name="Paulsen I."/>
            <person name="Pilsyk S."/>
            <person name="Pocsi I."/>
            <person name="Punt P.J."/>
            <person name="Ram A.F."/>
            <person name="Ren Q."/>
            <person name="Robellet X."/>
            <person name="Robson G."/>
            <person name="Seiboth B."/>
            <person name="van Solingen P."/>
            <person name="Specht T."/>
            <person name="Sun J."/>
            <person name="Taheri-Talesh N."/>
            <person name="Takeshita N."/>
            <person name="Ussery D."/>
            <person name="vanKuyk P.A."/>
            <person name="Visser H."/>
            <person name="van de Vondervoort P.J."/>
            <person name="de Vries R.P."/>
            <person name="Walton J."/>
            <person name="Xiang X."/>
            <person name="Xiong Y."/>
            <person name="Zeng A.P."/>
            <person name="Brandt B.W."/>
            <person name="Cornell M.J."/>
            <person name="van den Hondel C.A."/>
            <person name="Visser J."/>
            <person name="Oliver S.G."/>
            <person name="Turner G."/>
        </authorList>
    </citation>
    <scope>GENOME REANNOTATION</scope>
    <source>
        <strain>FGSC A4 / ATCC 38163 / CBS 112.46 / NRRL 194 / M139</strain>
    </source>
</reference>
<dbReference type="EC" id="3.6.4.12"/>
<dbReference type="EMBL" id="AACD01000132">
    <property type="protein sequence ID" value="EAA61541.1"/>
    <property type="molecule type" value="Genomic_DNA"/>
</dbReference>
<dbReference type="EMBL" id="BN001304">
    <property type="protein sequence ID" value="CBF80039.1"/>
    <property type="status" value="ALT_SEQ"/>
    <property type="molecule type" value="Genomic_DNA"/>
</dbReference>
<dbReference type="RefSeq" id="XP_681022.1">
    <property type="nucleotide sequence ID" value="XM_675930.1"/>
</dbReference>
<dbReference type="SMR" id="Q5AVC7"/>
<dbReference type="FunCoup" id="Q5AVC7">
    <property type="interactions" value="664"/>
</dbReference>
<dbReference type="STRING" id="227321.Q5AVC7"/>
<dbReference type="eggNOG" id="KOG2327">
    <property type="taxonomic scope" value="Eukaryota"/>
</dbReference>
<dbReference type="HOGENOM" id="CLU_014815_3_0_1"/>
<dbReference type="InParanoid" id="Q5AVC7"/>
<dbReference type="Proteomes" id="UP000000560">
    <property type="component" value="Chromosome IV"/>
</dbReference>
<dbReference type="GO" id="GO:0000781">
    <property type="term" value="C:chromosome, telomeric region"/>
    <property type="evidence" value="ECO:0007669"/>
    <property type="project" value="UniProtKB-SubCell"/>
</dbReference>
<dbReference type="GO" id="GO:0043564">
    <property type="term" value="C:Ku70:Ku80 complex"/>
    <property type="evidence" value="ECO:0000318"/>
    <property type="project" value="GO_Central"/>
</dbReference>
<dbReference type="GO" id="GO:0005524">
    <property type="term" value="F:ATP binding"/>
    <property type="evidence" value="ECO:0007669"/>
    <property type="project" value="UniProtKB-KW"/>
</dbReference>
<dbReference type="GO" id="GO:0016887">
    <property type="term" value="F:ATP hydrolysis activity"/>
    <property type="evidence" value="ECO:0007669"/>
    <property type="project" value="RHEA"/>
</dbReference>
<dbReference type="GO" id="GO:0003684">
    <property type="term" value="F:damaged DNA binding"/>
    <property type="evidence" value="ECO:0007669"/>
    <property type="project" value="InterPro"/>
</dbReference>
<dbReference type="GO" id="GO:0003678">
    <property type="term" value="F:DNA helicase activity"/>
    <property type="evidence" value="ECO:0007669"/>
    <property type="project" value="InterPro"/>
</dbReference>
<dbReference type="GO" id="GO:0042162">
    <property type="term" value="F:telomeric DNA binding"/>
    <property type="evidence" value="ECO:0000318"/>
    <property type="project" value="GO_Central"/>
</dbReference>
<dbReference type="GO" id="GO:0006310">
    <property type="term" value="P:DNA recombination"/>
    <property type="evidence" value="ECO:0007669"/>
    <property type="project" value="UniProtKB-KW"/>
</dbReference>
<dbReference type="GO" id="GO:0006303">
    <property type="term" value="P:double-strand break repair via nonhomologous end joining"/>
    <property type="evidence" value="ECO:0000318"/>
    <property type="project" value="GO_Central"/>
</dbReference>
<dbReference type="GO" id="GO:0000723">
    <property type="term" value="P:telomere maintenance"/>
    <property type="evidence" value="ECO:0000318"/>
    <property type="project" value="GO_Central"/>
</dbReference>
<dbReference type="CDD" id="cd00788">
    <property type="entry name" value="KU70"/>
    <property type="match status" value="1"/>
</dbReference>
<dbReference type="CDD" id="cd01458">
    <property type="entry name" value="vWA_ku"/>
    <property type="match status" value="1"/>
</dbReference>
<dbReference type="FunFam" id="1.10.1600.10:FF:000004">
    <property type="entry name" value="ATP-dependent DNA helicase II subunit 1"/>
    <property type="match status" value="1"/>
</dbReference>
<dbReference type="FunFam" id="3.40.50.410:FF:000071">
    <property type="entry name" value="ATP-dependent DNA helicase II subunit 1"/>
    <property type="match status" value="1"/>
</dbReference>
<dbReference type="FunFam" id="4.10.970.10:FF:000003">
    <property type="entry name" value="ATP-dependent DNA helicase II subunit 1"/>
    <property type="match status" value="1"/>
</dbReference>
<dbReference type="FunFam" id="2.40.290.10:FF:000001">
    <property type="entry name" value="X-ray repair cross complementing 6"/>
    <property type="match status" value="1"/>
</dbReference>
<dbReference type="Gene3D" id="1.10.1600.10">
    <property type="match status" value="1"/>
</dbReference>
<dbReference type="Gene3D" id="2.40.290.10">
    <property type="match status" value="1"/>
</dbReference>
<dbReference type="Gene3D" id="4.10.970.10">
    <property type="entry name" value="Ku70, bridge and pillars"/>
    <property type="match status" value="1"/>
</dbReference>
<dbReference type="Gene3D" id="1.10.720.30">
    <property type="entry name" value="SAP domain"/>
    <property type="match status" value="1"/>
</dbReference>
<dbReference type="Gene3D" id="3.40.50.410">
    <property type="entry name" value="von Willebrand factor, type A domain"/>
    <property type="match status" value="1"/>
</dbReference>
<dbReference type="InterPro" id="IPR006165">
    <property type="entry name" value="Ku70"/>
</dbReference>
<dbReference type="InterPro" id="IPR006164">
    <property type="entry name" value="Ku70/Ku80_beta-barrel_dom"/>
</dbReference>
<dbReference type="InterPro" id="IPR027388">
    <property type="entry name" value="Ku70_bridge/pillars_dom_sf"/>
</dbReference>
<dbReference type="InterPro" id="IPR047087">
    <property type="entry name" value="KU70_core_dom"/>
</dbReference>
<dbReference type="InterPro" id="IPR005160">
    <property type="entry name" value="Ku_C"/>
</dbReference>
<dbReference type="InterPro" id="IPR005161">
    <property type="entry name" value="Ku_N"/>
</dbReference>
<dbReference type="InterPro" id="IPR003034">
    <property type="entry name" value="SAP_dom"/>
</dbReference>
<dbReference type="InterPro" id="IPR036361">
    <property type="entry name" value="SAP_dom_sf"/>
</dbReference>
<dbReference type="InterPro" id="IPR016194">
    <property type="entry name" value="SPOC-like_C_dom_sf"/>
</dbReference>
<dbReference type="InterPro" id="IPR036465">
    <property type="entry name" value="vWFA_dom_sf"/>
</dbReference>
<dbReference type="NCBIfam" id="TIGR00578">
    <property type="entry name" value="ku70"/>
    <property type="match status" value="1"/>
</dbReference>
<dbReference type="PANTHER" id="PTHR12604">
    <property type="entry name" value="KU AUTOANTIGEN DNA HELICASE"/>
    <property type="match status" value="1"/>
</dbReference>
<dbReference type="PANTHER" id="PTHR12604:SF2">
    <property type="entry name" value="X-RAY REPAIR CROSS-COMPLEMENTING PROTEIN 6"/>
    <property type="match status" value="1"/>
</dbReference>
<dbReference type="Pfam" id="PF02735">
    <property type="entry name" value="Ku"/>
    <property type="match status" value="1"/>
</dbReference>
<dbReference type="Pfam" id="PF03730">
    <property type="entry name" value="Ku_C"/>
    <property type="match status" value="1"/>
</dbReference>
<dbReference type="Pfam" id="PF03731">
    <property type="entry name" value="Ku_N"/>
    <property type="match status" value="1"/>
</dbReference>
<dbReference type="Pfam" id="PF02037">
    <property type="entry name" value="SAP"/>
    <property type="match status" value="1"/>
</dbReference>
<dbReference type="PIRSF" id="PIRSF003033">
    <property type="entry name" value="Ku70"/>
    <property type="match status" value="1"/>
</dbReference>
<dbReference type="SMART" id="SM00559">
    <property type="entry name" value="Ku78"/>
    <property type="match status" value="1"/>
</dbReference>
<dbReference type="SMART" id="SM00513">
    <property type="entry name" value="SAP"/>
    <property type="match status" value="1"/>
</dbReference>
<dbReference type="SUPFAM" id="SSF68906">
    <property type="entry name" value="SAP domain"/>
    <property type="match status" value="1"/>
</dbReference>
<dbReference type="SUPFAM" id="SSF100939">
    <property type="entry name" value="SPOC domain-like"/>
    <property type="match status" value="1"/>
</dbReference>
<dbReference type="SUPFAM" id="SSF53300">
    <property type="entry name" value="vWA-like"/>
    <property type="match status" value="1"/>
</dbReference>
<dbReference type="PROSITE" id="PS50800">
    <property type="entry name" value="SAP"/>
    <property type="match status" value="1"/>
</dbReference>
<keyword id="KW-0067">ATP-binding</keyword>
<keyword id="KW-0158">Chromosome</keyword>
<keyword id="KW-0227">DNA damage</keyword>
<keyword id="KW-0233">DNA recombination</keyword>
<keyword id="KW-0234">DNA repair</keyword>
<keyword id="KW-0238">DNA-binding</keyword>
<keyword id="KW-0347">Helicase</keyword>
<keyword id="KW-0378">Hydrolase</keyword>
<keyword id="KW-0547">Nucleotide-binding</keyword>
<keyword id="KW-0539">Nucleus</keyword>
<keyword id="KW-1185">Reference proteome</keyword>
<keyword id="KW-0779">Telomere</keyword>
<accession>Q5AVC7</accession>
<accession>C8VDM1</accession>
<evidence type="ECO:0000250" key="1"/>
<evidence type="ECO:0000255" key="2">
    <source>
        <dbReference type="PROSITE-ProRule" id="PRU00186"/>
    </source>
</evidence>
<evidence type="ECO:0000256" key="3">
    <source>
        <dbReference type="SAM" id="MobiDB-lite"/>
    </source>
</evidence>
<evidence type="ECO:0000305" key="4"/>
<feature type="chain" id="PRO_0000278343" description="ATP-dependent DNA helicase II subunit 1">
    <location>
        <begin position="1"/>
        <end position="629"/>
    </location>
</feature>
<feature type="domain" description="Ku">
    <location>
        <begin position="259"/>
        <end position="468"/>
    </location>
</feature>
<feature type="domain" description="SAP" evidence="2">
    <location>
        <begin position="591"/>
        <end position="625"/>
    </location>
</feature>
<feature type="region of interest" description="Disordered" evidence="3">
    <location>
        <begin position="1"/>
        <end position="33"/>
    </location>
</feature>
<feature type="region of interest" description="Disordered" evidence="3">
    <location>
        <begin position="543"/>
        <end position="575"/>
    </location>
</feature>
<feature type="compositionally biased region" description="Acidic residues" evidence="3">
    <location>
        <begin position="1"/>
        <end position="18"/>
    </location>
</feature>
<feature type="compositionally biased region" description="Basic and acidic residues" evidence="3">
    <location>
        <begin position="19"/>
        <end position="31"/>
    </location>
</feature>
<proteinExistence type="inferred from homology"/>